<gene>
    <name evidence="1" type="primary">gpsA</name>
    <name type="ordered locus">VV3087</name>
</gene>
<dbReference type="EC" id="1.1.1.94" evidence="1"/>
<dbReference type="EMBL" id="BA000037">
    <property type="protein sequence ID" value="BAC95851.1"/>
    <property type="molecule type" value="Genomic_DNA"/>
</dbReference>
<dbReference type="RefSeq" id="WP_011079262.1">
    <property type="nucleotide sequence ID" value="NC_005139.1"/>
</dbReference>
<dbReference type="SMR" id="Q7MGY7"/>
<dbReference type="STRING" id="672.VV93_v1c28130"/>
<dbReference type="KEGG" id="vvy:VV3087"/>
<dbReference type="eggNOG" id="COG0240">
    <property type="taxonomic scope" value="Bacteria"/>
</dbReference>
<dbReference type="HOGENOM" id="CLU_033449_0_2_6"/>
<dbReference type="UniPathway" id="UPA00940"/>
<dbReference type="Proteomes" id="UP000002675">
    <property type="component" value="Chromosome I"/>
</dbReference>
<dbReference type="GO" id="GO:0005829">
    <property type="term" value="C:cytosol"/>
    <property type="evidence" value="ECO:0007669"/>
    <property type="project" value="TreeGrafter"/>
</dbReference>
<dbReference type="GO" id="GO:0047952">
    <property type="term" value="F:glycerol-3-phosphate dehydrogenase [NAD(P)+] activity"/>
    <property type="evidence" value="ECO:0007669"/>
    <property type="project" value="UniProtKB-UniRule"/>
</dbReference>
<dbReference type="GO" id="GO:0051287">
    <property type="term" value="F:NAD binding"/>
    <property type="evidence" value="ECO:0007669"/>
    <property type="project" value="InterPro"/>
</dbReference>
<dbReference type="GO" id="GO:0005975">
    <property type="term" value="P:carbohydrate metabolic process"/>
    <property type="evidence" value="ECO:0007669"/>
    <property type="project" value="InterPro"/>
</dbReference>
<dbReference type="GO" id="GO:0046167">
    <property type="term" value="P:glycerol-3-phosphate biosynthetic process"/>
    <property type="evidence" value="ECO:0007669"/>
    <property type="project" value="UniProtKB-UniRule"/>
</dbReference>
<dbReference type="GO" id="GO:0046168">
    <property type="term" value="P:glycerol-3-phosphate catabolic process"/>
    <property type="evidence" value="ECO:0007669"/>
    <property type="project" value="InterPro"/>
</dbReference>
<dbReference type="GO" id="GO:0046474">
    <property type="term" value="P:glycerophospholipid biosynthetic process"/>
    <property type="evidence" value="ECO:0007669"/>
    <property type="project" value="TreeGrafter"/>
</dbReference>
<dbReference type="FunFam" id="1.10.1040.10:FF:000001">
    <property type="entry name" value="Glycerol-3-phosphate dehydrogenase [NAD(P)+]"/>
    <property type="match status" value="1"/>
</dbReference>
<dbReference type="FunFam" id="3.40.50.720:FF:000019">
    <property type="entry name" value="Glycerol-3-phosphate dehydrogenase [NAD(P)+]"/>
    <property type="match status" value="1"/>
</dbReference>
<dbReference type="Gene3D" id="1.10.1040.10">
    <property type="entry name" value="N-(1-d-carboxylethyl)-l-norvaline Dehydrogenase, domain 2"/>
    <property type="match status" value="1"/>
</dbReference>
<dbReference type="Gene3D" id="3.40.50.720">
    <property type="entry name" value="NAD(P)-binding Rossmann-like Domain"/>
    <property type="match status" value="1"/>
</dbReference>
<dbReference type="HAMAP" id="MF_00394">
    <property type="entry name" value="NAD_Glyc3P_dehydrog"/>
    <property type="match status" value="1"/>
</dbReference>
<dbReference type="InterPro" id="IPR008927">
    <property type="entry name" value="6-PGluconate_DH-like_C_sf"/>
</dbReference>
<dbReference type="InterPro" id="IPR013328">
    <property type="entry name" value="6PGD_dom2"/>
</dbReference>
<dbReference type="InterPro" id="IPR006168">
    <property type="entry name" value="G3P_DH_NAD-dep"/>
</dbReference>
<dbReference type="InterPro" id="IPR006109">
    <property type="entry name" value="G3P_DH_NAD-dep_C"/>
</dbReference>
<dbReference type="InterPro" id="IPR011128">
    <property type="entry name" value="G3P_DH_NAD-dep_N"/>
</dbReference>
<dbReference type="InterPro" id="IPR036291">
    <property type="entry name" value="NAD(P)-bd_dom_sf"/>
</dbReference>
<dbReference type="NCBIfam" id="NF000939">
    <property type="entry name" value="PRK00094.1-1"/>
    <property type="match status" value="1"/>
</dbReference>
<dbReference type="NCBIfam" id="NF000940">
    <property type="entry name" value="PRK00094.1-2"/>
    <property type="match status" value="1"/>
</dbReference>
<dbReference type="NCBIfam" id="NF000942">
    <property type="entry name" value="PRK00094.1-4"/>
    <property type="match status" value="1"/>
</dbReference>
<dbReference type="PANTHER" id="PTHR11728">
    <property type="entry name" value="GLYCEROL-3-PHOSPHATE DEHYDROGENASE"/>
    <property type="match status" value="1"/>
</dbReference>
<dbReference type="PANTHER" id="PTHR11728:SF1">
    <property type="entry name" value="GLYCEROL-3-PHOSPHATE DEHYDROGENASE [NAD(+)] 2, CHLOROPLASTIC"/>
    <property type="match status" value="1"/>
</dbReference>
<dbReference type="Pfam" id="PF07479">
    <property type="entry name" value="NAD_Gly3P_dh_C"/>
    <property type="match status" value="1"/>
</dbReference>
<dbReference type="Pfam" id="PF01210">
    <property type="entry name" value="NAD_Gly3P_dh_N"/>
    <property type="match status" value="1"/>
</dbReference>
<dbReference type="PIRSF" id="PIRSF000114">
    <property type="entry name" value="Glycerol-3-P_dh"/>
    <property type="match status" value="1"/>
</dbReference>
<dbReference type="PRINTS" id="PR00077">
    <property type="entry name" value="GPDHDRGNASE"/>
</dbReference>
<dbReference type="SUPFAM" id="SSF48179">
    <property type="entry name" value="6-phosphogluconate dehydrogenase C-terminal domain-like"/>
    <property type="match status" value="1"/>
</dbReference>
<dbReference type="SUPFAM" id="SSF51735">
    <property type="entry name" value="NAD(P)-binding Rossmann-fold domains"/>
    <property type="match status" value="1"/>
</dbReference>
<dbReference type="PROSITE" id="PS00957">
    <property type="entry name" value="NAD_G3PDH"/>
    <property type="match status" value="1"/>
</dbReference>
<comment type="function">
    <text evidence="1">Catalyzes the reduction of the glycolytic intermediate dihydroxyacetone phosphate (DHAP) to sn-glycerol 3-phosphate (G3P), the key precursor for phospholipid synthesis.</text>
</comment>
<comment type="catalytic activity">
    <reaction evidence="1">
        <text>sn-glycerol 3-phosphate + NAD(+) = dihydroxyacetone phosphate + NADH + H(+)</text>
        <dbReference type="Rhea" id="RHEA:11092"/>
        <dbReference type="ChEBI" id="CHEBI:15378"/>
        <dbReference type="ChEBI" id="CHEBI:57540"/>
        <dbReference type="ChEBI" id="CHEBI:57597"/>
        <dbReference type="ChEBI" id="CHEBI:57642"/>
        <dbReference type="ChEBI" id="CHEBI:57945"/>
        <dbReference type="EC" id="1.1.1.94"/>
    </reaction>
    <physiologicalReaction direction="right-to-left" evidence="1">
        <dbReference type="Rhea" id="RHEA:11094"/>
    </physiologicalReaction>
</comment>
<comment type="catalytic activity">
    <reaction evidence="1">
        <text>sn-glycerol 3-phosphate + NADP(+) = dihydroxyacetone phosphate + NADPH + H(+)</text>
        <dbReference type="Rhea" id="RHEA:11096"/>
        <dbReference type="ChEBI" id="CHEBI:15378"/>
        <dbReference type="ChEBI" id="CHEBI:57597"/>
        <dbReference type="ChEBI" id="CHEBI:57642"/>
        <dbReference type="ChEBI" id="CHEBI:57783"/>
        <dbReference type="ChEBI" id="CHEBI:58349"/>
        <dbReference type="EC" id="1.1.1.94"/>
    </reaction>
    <physiologicalReaction direction="right-to-left" evidence="1">
        <dbReference type="Rhea" id="RHEA:11098"/>
    </physiologicalReaction>
</comment>
<comment type="pathway">
    <text evidence="1">Membrane lipid metabolism; glycerophospholipid metabolism.</text>
</comment>
<comment type="subcellular location">
    <subcellularLocation>
        <location evidence="1">Cytoplasm</location>
    </subcellularLocation>
</comment>
<comment type="similarity">
    <text evidence="1">Belongs to the NAD-dependent glycerol-3-phosphate dehydrogenase family.</text>
</comment>
<organism>
    <name type="scientific">Vibrio vulnificus (strain YJ016)</name>
    <dbReference type="NCBI Taxonomy" id="196600"/>
    <lineage>
        <taxon>Bacteria</taxon>
        <taxon>Pseudomonadati</taxon>
        <taxon>Pseudomonadota</taxon>
        <taxon>Gammaproteobacteria</taxon>
        <taxon>Vibrionales</taxon>
        <taxon>Vibrionaceae</taxon>
        <taxon>Vibrio</taxon>
    </lineage>
</organism>
<name>GPDA_VIBVY</name>
<evidence type="ECO:0000255" key="1">
    <source>
        <dbReference type="HAMAP-Rule" id="MF_00394"/>
    </source>
</evidence>
<protein>
    <recommendedName>
        <fullName evidence="1">Glycerol-3-phosphate dehydrogenase [NAD(P)+]</fullName>
        <ecNumber evidence="1">1.1.1.94</ecNumber>
    </recommendedName>
    <alternativeName>
        <fullName evidence="1">NAD(P)(+)-dependent glycerol-3-phosphate dehydrogenase</fullName>
    </alternativeName>
    <alternativeName>
        <fullName evidence="1">NAD(P)H-dependent dihydroxyacetone-phosphate reductase</fullName>
    </alternativeName>
</protein>
<reference key="1">
    <citation type="journal article" date="2003" name="Genome Res.">
        <title>Comparative genome analysis of Vibrio vulnificus, a marine pathogen.</title>
        <authorList>
            <person name="Chen C.-Y."/>
            <person name="Wu K.-M."/>
            <person name="Chang Y.-C."/>
            <person name="Chang C.-H."/>
            <person name="Tsai H.-C."/>
            <person name="Liao T.-L."/>
            <person name="Liu Y.-M."/>
            <person name="Chen H.-J."/>
            <person name="Shen A.B.-T."/>
            <person name="Li J.-C."/>
            <person name="Su T.-L."/>
            <person name="Shao C.-P."/>
            <person name="Lee C.-T."/>
            <person name="Hor L.-I."/>
            <person name="Tsai S.-F."/>
        </authorList>
    </citation>
    <scope>NUCLEOTIDE SEQUENCE [LARGE SCALE GENOMIC DNA]</scope>
    <source>
        <strain>YJ016</strain>
    </source>
</reference>
<sequence length="345" mass="36960">MTQTLVNNAYGKEISMTVIGAGSYGTSLAISLSRNGANVVLWGHEPEHMAKLEADRANHEFLPGIEFPPSLIVESDLAKAVQASRDLLVVVPSHVFGIVLNSLKPYLRDDSRICWATKGLEPETGRLLKDVAFDVLGEHYSLAVLSGPTFAKELAAGMPTAISVASPDAQFVADLQEKIHCSKTFRVYANSDFTGMQLGGAVKNVIAIGAGMSDGIGFGANARTALITRGLAEMCRLGAALGAQPETFMGMAGLGDLVLTCTDNQSRNRRFGLALGQGKDVDTAQADIGQVVEGYRNTKEVWMLAQRMGVEMPIVDQIYQVLYQGKDARLAAQDLLARDKKSEGK</sequence>
<keyword id="KW-0963">Cytoplasm</keyword>
<keyword id="KW-0444">Lipid biosynthesis</keyword>
<keyword id="KW-0443">Lipid metabolism</keyword>
<keyword id="KW-0520">NAD</keyword>
<keyword id="KW-0521">NADP</keyword>
<keyword id="KW-0547">Nucleotide-binding</keyword>
<keyword id="KW-0560">Oxidoreductase</keyword>
<keyword id="KW-0594">Phospholipid biosynthesis</keyword>
<keyword id="KW-1208">Phospholipid metabolism</keyword>
<proteinExistence type="inferred from homology"/>
<feature type="chain" id="PRO_0000138057" description="Glycerol-3-phosphate dehydrogenase [NAD(P)+]">
    <location>
        <begin position="1"/>
        <end position="345"/>
    </location>
</feature>
<feature type="active site" description="Proton acceptor" evidence="1">
    <location>
        <position position="203"/>
    </location>
</feature>
<feature type="binding site" evidence="1">
    <location>
        <position position="23"/>
    </location>
    <ligand>
        <name>NADPH</name>
        <dbReference type="ChEBI" id="CHEBI:57783"/>
    </ligand>
</feature>
<feature type="binding site" evidence="1">
    <location>
        <position position="24"/>
    </location>
    <ligand>
        <name>NADPH</name>
        <dbReference type="ChEBI" id="CHEBI:57783"/>
    </ligand>
</feature>
<feature type="binding site" evidence="1">
    <location>
        <position position="44"/>
    </location>
    <ligand>
        <name>NADPH</name>
        <dbReference type="ChEBI" id="CHEBI:57783"/>
    </ligand>
</feature>
<feature type="binding site" evidence="1">
    <location>
        <position position="118"/>
    </location>
    <ligand>
        <name>NADPH</name>
        <dbReference type="ChEBI" id="CHEBI:57783"/>
    </ligand>
</feature>
<feature type="binding site" evidence="1">
    <location>
        <position position="118"/>
    </location>
    <ligand>
        <name>sn-glycerol 3-phosphate</name>
        <dbReference type="ChEBI" id="CHEBI:57597"/>
    </ligand>
</feature>
<feature type="binding site" evidence="1">
    <location>
        <position position="147"/>
    </location>
    <ligand>
        <name>sn-glycerol 3-phosphate</name>
        <dbReference type="ChEBI" id="CHEBI:57597"/>
    </ligand>
</feature>
<feature type="binding site" evidence="1">
    <location>
        <position position="149"/>
    </location>
    <ligand>
        <name>sn-glycerol 3-phosphate</name>
        <dbReference type="ChEBI" id="CHEBI:57597"/>
    </ligand>
</feature>
<feature type="binding site" evidence="1">
    <location>
        <position position="151"/>
    </location>
    <ligand>
        <name>NADPH</name>
        <dbReference type="ChEBI" id="CHEBI:57783"/>
    </ligand>
</feature>
<feature type="binding site" evidence="1">
    <location>
        <position position="203"/>
    </location>
    <ligand>
        <name>sn-glycerol 3-phosphate</name>
        <dbReference type="ChEBI" id="CHEBI:57597"/>
    </ligand>
</feature>
<feature type="binding site" evidence="1">
    <location>
        <position position="256"/>
    </location>
    <ligand>
        <name>sn-glycerol 3-phosphate</name>
        <dbReference type="ChEBI" id="CHEBI:57597"/>
    </ligand>
</feature>
<feature type="binding site" evidence="1">
    <location>
        <position position="266"/>
    </location>
    <ligand>
        <name>sn-glycerol 3-phosphate</name>
        <dbReference type="ChEBI" id="CHEBI:57597"/>
    </ligand>
</feature>
<feature type="binding site" evidence="1">
    <location>
        <position position="267"/>
    </location>
    <ligand>
        <name>NADPH</name>
        <dbReference type="ChEBI" id="CHEBI:57783"/>
    </ligand>
</feature>
<feature type="binding site" evidence="1">
    <location>
        <position position="267"/>
    </location>
    <ligand>
        <name>sn-glycerol 3-phosphate</name>
        <dbReference type="ChEBI" id="CHEBI:57597"/>
    </ligand>
</feature>
<feature type="binding site" evidence="1">
    <location>
        <position position="268"/>
    </location>
    <ligand>
        <name>sn-glycerol 3-phosphate</name>
        <dbReference type="ChEBI" id="CHEBI:57597"/>
    </ligand>
</feature>
<feature type="binding site" evidence="1">
    <location>
        <position position="291"/>
    </location>
    <ligand>
        <name>NADPH</name>
        <dbReference type="ChEBI" id="CHEBI:57783"/>
    </ligand>
</feature>
<feature type="binding site" evidence="1">
    <location>
        <position position="293"/>
    </location>
    <ligand>
        <name>NADPH</name>
        <dbReference type="ChEBI" id="CHEBI:57783"/>
    </ligand>
</feature>
<accession>Q7MGY7</accession>